<accession>A1UUC1</accession>
<name>ARGB_BARBK</name>
<sequence length="301" mass="32044">MDNVANNDVDVLEKQAAFLSSALPYMQKYENETVVIKYGGHAMGNLALGQAFARDIALLKQSGVNPIVVHGGGPRIAETLKKMGIESRFESGLRVTDEKIVEVVEMVLAGSINKEIVALINAEGEWAIGLCGKDGNMVFAEKVHKTVIDPNSNSERVLDLGFVGEPVEIDRTLLDFLACSEMIPVIAPIAPGRDGKTYNINADIFAGAIAGALEAKRLLFLTDVPGVLDKEGKVLKELTVTEAKNLIKDGTISGGMIPKVETCINAIQGGVEGVVILNGKTSHPVLLELFTEHGAGTLIIS</sequence>
<reference key="1">
    <citation type="submission" date="2006-12" db="EMBL/GenBank/DDBJ databases">
        <authorList>
            <person name="Hendrix L."/>
            <person name="Mohamoud Y."/>
            <person name="Radune D."/>
            <person name="Shvartsbeyn A."/>
            <person name="Daugherty S."/>
            <person name="Dodson R."/>
            <person name="Durkin A.S."/>
            <person name="Harkins D."/>
            <person name="Huot H."/>
            <person name="Kothari S.P."/>
            <person name="Madupu R."/>
            <person name="Li J."/>
            <person name="Nelson W.C."/>
            <person name="Shrivastava S."/>
            <person name="Giglio M.G."/>
            <person name="Haft D."/>
            <person name="Selengut J."/>
            <person name="Fraser-Ligget C."/>
            <person name="Seshadri R."/>
        </authorList>
    </citation>
    <scope>NUCLEOTIDE SEQUENCE [LARGE SCALE GENOMIC DNA]</scope>
    <source>
        <strain>ATCC 35685 / KC583 / Herrer 020/F12,63</strain>
    </source>
</reference>
<organism>
    <name type="scientific">Bartonella bacilliformis (strain ATCC 35685 / KC583 / Herrer 020/F12,63)</name>
    <dbReference type="NCBI Taxonomy" id="360095"/>
    <lineage>
        <taxon>Bacteria</taxon>
        <taxon>Pseudomonadati</taxon>
        <taxon>Pseudomonadota</taxon>
        <taxon>Alphaproteobacteria</taxon>
        <taxon>Hyphomicrobiales</taxon>
        <taxon>Bartonellaceae</taxon>
        <taxon>Bartonella</taxon>
    </lineage>
</organism>
<feature type="chain" id="PRO_1000010485" description="Acetylglutamate kinase">
    <location>
        <begin position="1"/>
        <end position="301"/>
    </location>
</feature>
<feature type="binding site" evidence="1">
    <location>
        <begin position="72"/>
        <end position="73"/>
    </location>
    <ligand>
        <name>substrate</name>
    </ligand>
</feature>
<feature type="binding site" evidence="1">
    <location>
        <position position="94"/>
    </location>
    <ligand>
        <name>substrate</name>
    </ligand>
</feature>
<feature type="binding site" evidence="1">
    <location>
        <position position="199"/>
    </location>
    <ligand>
        <name>substrate</name>
    </ligand>
</feature>
<feature type="site" description="Transition state stabilizer" evidence="1">
    <location>
        <position position="37"/>
    </location>
</feature>
<feature type="site" description="Transition state stabilizer" evidence="1">
    <location>
        <position position="259"/>
    </location>
</feature>
<evidence type="ECO:0000255" key="1">
    <source>
        <dbReference type="HAMAP-Rule" id="MF_00082"/>
    </source>
</evidence>
<protein>
    <recommendedName>
        <fullName evidence="1">Acetylglutamate kinase</fullName>
        <ecNumber evidence="1">2.7.2.8</ecNumber>
    </recommendedName>
    <alternativeName>
        <fullName evidence="1">N-acetyl-L-glutamate 5-phosphotransferase</fullName>
    </alternativeName>
    <alternativeName>
        <fullName evidence="1">NAG kinase</fullName>
        <shortName evidence="1">NAGK</shortName>
    </alternativeName>
</protein>
<comment type="function">
    <text evidence="1">Catalyzes the ATP-dependent phosphorylation of N-acetyl-L-glutamate.</text>
</comment>
<comment type="catalytic activity">
    <reaction evidence="1">
        <text>N-acetyl-L-glutamate + ATP = N-acetyl-L-glutamyl 5-phosphate + ADP</text>
        <dbReference type="Rhea" id="RHEA:14629"/>
        <dbReference type="ChEBI" id="CHEBI:30616"/>
        <dbReference type="ChEBI" id="CHEBI:44337"/>
        <dbReference type="ChEBI" id="CHEBI:57936"/>
        <dbReference type="ChEBI" id="CHEBI:456216"/>
        <dbReference type="EC" id="2.7.2.8"/>
    </reaction>
</comment>
<comment type="pathway">
    <text evidence="1">Amino-acid biosynthesis; L-arginine biosynthesis; N(2)-acetyl-L-ornithine from L-glutamate: step 2/4.</text>
</comment>
<comment type="subcellular location">
    <subcellularLocation>
        <location evidence="1">Cytoplasm</location>
    </subcellularLocation>
</comment>
<comment type="similarity">
    <text evidence="1">Belongs to the acetylglutamate kinase family. ArgB subfamily.</text>
</comment>
<proteinExistence type="inferred from homology"/>
<keyword id="KW-0028">Amino-acid biosynthesis</keyword>
<keyword id="KW-0055">Arginine biosynthesis</keyword>
<keyword id="KW-0067">ATP-binding</keyword>
<keyword id="KW-0963">Cytoplasm</keyword>
<keyword id="KW-0418">Kinase</keyword>
<keyword id="KW-0547">Nucleotide-binding</keyword>
<keyword id="KW-0808">Transferase</keyword>
<dbReference type="EC" id="2.7.2.8" evidence="1"/>
<dbReference type="EMBL" id="CP000524">
    <property type="protein sequence ID" value="ABM45266.1"/>
    <property type="molecule type" value="Genomic_DNA"/>
</dbReference>
<dbReference type="RefSeq" id="WP_005768112.1">
    <property type="nucleotide sequence ID" value="NC_008783.1"/>
</dbReference>
<dbReference type="SMR" id="A1UUC1"/>
<dbReference type="STRING" id="360095.BARBAKC583_1326"/>
<dbReference type="GeneID" id="4684528"/>
<dbReference type="KEGG" id="bbk:BARBAKC583_1326"/>
<dbReference type="PATRIC" id="fig|360095.6.peg.1298"/>
<dbReference type="eggNOG" id="COG0548">
    <property type="taxonomic scope" value="Bacteria"/>
</dbReference>
<dbReference type="HOGENOM" id="CLU_053680_0_0_5"/>
<dbReference type="OrthoDB" id="9803155at2"/>
<dbReference type="UniPathway" id="UPA00068">
    <property type="reaction ID" value="UER00107"/>
</dbReference>
<dbReference type="Proteomes" id="UP000000643">
    <property type="component" value="Chromosome"/>
</dbReference>
<dbReference type="GO" id="GO:0005737">
    <property type="term" value="C:cytoplasm"/>
    <property type="evidence" value="ECO:0007669"/>
    <property type="project" value="UniProtKB-SubCell"/>
</dbReference>
<dbReference type="GO" id="GO:0003991">
    <property type="term" value="F:acetylglutamate kinase activity"/>
    <property type="evidence" value="ECO:0007669"/>
    <property type="project" value="UniProtKB-UniRule"/>
</dbReference>
<dbReference type="GO" id="GO:0005524">
    <property type="term" value="F:ATP binding"/>
    <property type="evidence" value="ECO:0007669"/>
    <property type="project" value="UniProtKB-UniRule"/>
</dbReference>
<dbReference type="GO" id="GO:0042450">
    <property type="term" value="P:arginine biosynthetic process via ornithine"/>
    <property type="evidence" value="ECO:0007669"/>
    <property type="project" value="UniProtKB-UniRule"/>
</dbReference>
<dbReference type="GO" id="GO:0006526">
    <property type="term" value="P:L-arginine biosynthetic process"/>
    <property type="evidence" value="ECO:0007669"/>
    <property type="project" value="UniProtKB-UniPathway"/>
</dbReference>
<dbReference type="CDD" id="cd04250">
    <property type="entry name" value="AAK_NAGK-C"/>
    <property type="match status" value="1"/>
</dbReference>
<dbReference type="FunFam" id="3.40.1160.10:FF:000004">
    <property type="entry name" value="Acetylglutamate kinase"/>
    <property type="match status" value="1"/>
</dbReference>
<dbReference type="Gene3D" id="3.40.1160.10">
    <property type="entry name" value="Acetylglutamate kinase-like"/>
    <property type="match status" value="1"/>
</dbReference>
<dbReference type="HAMAP" id="MF_00082">
    <property type="entry name" value="ArgB"/>
    <property type="match status" value="1"/>
</dbReference>
<dbReference type="InterPro" id="IPR036393">
    <property type="entry name" value="AceGlu_kinase-like_sf"/>
</dbReference>
<dbReference type="InterPro" id="IPR004662">
    <property type="entry name" value="AcgluKinase_fam"/>
</dbReference>
<dbReference type="InterPro" id="IPR037528">
    <property type="entry name" value="ArgB"/>
</dbReference>
<dbReference type="InterPro" id="IPR001048">
    <property type="entry name" value="Asp/Glu/Uridylate_kinase"/>
</dbReference>
<dbReference type="InterPro" id="IPR001057">
    <property type="entry name" value="Glu/AcGlu_kinase"/>
</dbReference>
<dbReference type="InterPro" id="IPR041727">
    <property type="entry name" value="NAGK-C"/>
</dbReference>
<dbReference type="NCBIfam" id="TIGR00761">
    <property type="entry name" value="argB"/>
    <property type="match status" value="1"/>
</dbReference>
<dbReference type="PANTHER" id="PTHR23342">
    <property type="entry name" value="N-ACETYLGLUTAMATE SYNTHASE"/>
    <property type="match status" value="1"/>
</dbReference>
<dbReference type="PANTHER" id="PTHR23342:SF0">
    <property type="entry name" value="N-ACETYLGLUTAMATE SYNTHASE, MITOCHONDRIAL"/>
    <property type="match status" value="1"/>
</dbReference>
<dbReference type="Pfam" id="PF00696">
    <property type="entry name" value="AA_kinase"/>
    <property type="match status" value="1"/>
</dbReference>
<dbReference type="PIRSF" id="PIRSF000728">
    <property type="entry name" value="NAGK"/>
    <property type="match status" value="1"/>
</dbReference>
<dbReference type="PRINTS" id="PR00474">
    <property type="entry name" value="GLU5KINASE"/>
</dbReference>
<dbReference type="SUPFAM" id="SSF53633">
    <property type="entry name" value="Carbamate kinase-like"/>
    <property type="match status" value="1"/>
</dbReference>
<gene>
    <name evidence="1" type="primary">argB</name>
    <name type="ordered locus">BARBAKC583_1326</name>
</gene>